<proteinExistence type="inferred from homology"/>
<comment type="function">
    <text>May be a sulfotransferase involved in the formation of thiosulfate.</text>
</comment>
<comment type="catalytic activity">
    <reaction>
        <text>thiosulfate + hydrogen cyanide = thiocyanate + sulfite + 2 H(+)</text>
        <dbReference type="Rhea" id="RHEA:16881"/>
        <dbReference type="ChEBI" id="CHEBI:15378"/>
        <dbReference type="ChEBI" id="CHEBI:17359"/>
        <dbReference type="ChEBI" id="CHEBI:18022"/>
        <dbReference type="ChEBI" id="CHEBI:18407"/>
        <dbReference type="ChEBI" id="CHEBI:33542"/>
        <dbReference type="EC" id="2.8.1.1"/>
    </reaction>
</comment>
<comment type="domain">
    <text evidence="1">Contains two rhodanese domains with different primary structures but with near identical secondary structure conformations suggesting a common evolutionary origin. Only the C-terminal rhodanese domain contains the catalytic cysteine residue (By similarity).</text>
</comment>
<keyword id="KW-1185">Reference proteome</keyword>
<keyword id="KW-0677">Repeat</keyword>
<keyword id="KW-0808">Transferase</keyword>
<dbReference type="EC" id="2.8.1.1"/>
<dbReference type="EMBL" id="U15182">
    <property type="protein sequence ID" value="AAA62982.1"/>
    <property type="molecule type" value="Genomic_DNA"/>
</dbReference>
<dbReference type="EMBL" id="AL583924">
    <property type="protein sequence ID" value="CAC31153.1"/>
    <property type="molecule type" value="Genomic_DNA"/>
</dbReference>
<dbReference type="PIR" id="A87184">
    <property type="entry name" value="A87184"/>
</dbReference>
<dbReference type="RefSeq" id="NP_302440.1">
    <property type="nucleotide sequence ID" value="NC_002677.1"/>
</dbReference>
<dbReference type="RefSeq" id="WP_010908760.1">
    <property type="nucleotide sequence ID" value="NC_002677.1"/>
</dbReference>
<dbReference type="SMR" id="Q50036"/>
<dbReference type="STRING" id="272631.gene:17576055"/>
<dbReference type="KEGG" id="mle:ML2198"/>
<dbReference type="PATRIC" id="fig|272631.5.peg.4165"/>
<dbReference type="Leproma" id="ML2198"/>
<dbReference type="eggNOG" id="COG2897">
    <property type="taxonomic scope" value="Bacteria"/>
</dbReference>
<dbReference type="HOGENOM" id="CLU_031618_1_3_11"/>
<dbReference type="OrthoDB" id="9781034at2"/>
<dbReference type="Proteomes" id="UP000000806">
    <property type="component" value="Chromosome"/>
</dbReference>
<dbReference type="GO" id="GO:0004792">
    <property type="term" value="F:thiosulfate-cyanide sulfurtransferase activity"/>
    <property type="evidence" value="ECO:0007669"/>
    <property type="project" value="UniProtKB-EC"/>
</dbReference>
<dbReference type="CDD" id="cd01448">
    <property type="entry name" value="TST_Repeat_1"/>
    <property type="match status" value="1"/>
</dbReference>
<dbReference type="CDD" id="cd01449">
    <property type="entry name" value="TST_Repeat_2"/>
    <property type="match status" value="1"/>
</dbReference>
<dbReference type="FunFam" id="3.40.250.10:FF:000024">
    <property type="entry name" value="Sulfurtransferase"/>
    <property type="match status" value="1"/>
</dbReference>
<dbReference type="Gene3D" id="3.40.250.10">
    <property type="entry name" value="Rhodanese-like domain"/>
    <property type="match status" value="2"/>
</dbReference>
<dbReference type="InterPro" id="IPR001763">
    <property type="entry name" value="Rhodanese-like_dom"/>
</dbReference>
<dbReference type="InterPro" id="IPR036873">
    <property type="entry name" value="Rhodanese-like_dom_sf"/>
</dbReference>
<dbReference type="InterPro" id="IPR051126">
    <property type="entry name" value="Thiosulfate_sulfurtransferase"/>
</dbReference>
<dbReference type="InterPro" id="IPR001307">
    <property type="entry name" value="Thiosulphate_STrfase_CS"/>
</dbReference>
<dbReference type="PANTHER" id="PTHR43855">
    <property type="entry name" value="THIOSULFATE SULFURTRANSFERASE"/>
    <property type="match status" value="1"/>
</dbReference>
<dbReference type="PANTHER" id="PTHR43855:SF1">
    <property type="entry name" value="THIOSULFATE SULFURTRANSFERASE"/>
    <property type="match status" value="1"/>
</dbReference>
<dbReference type="Pfam" id="PF00581">
    <property type="entry name" value="Rhodanese"/>
    <property type="match status" value="2"/>
</dbReference>
<dbReference type="SMART" id="SM00450">
    <property type="entry name" value="RHOD"/>
    <property type="match status" value="2"/>
</dbReference>
<dbReference type="SUPFAM" id="SSF52821">
    <property type="entry name" value="Rhodanese/Cell cycle control phosphatase"/>
    <property type="match status" value="2"/>
</dbReference>
<dbReference type="PROSITE" id="PS00683">
    <property type="entry name" value="RHODANESE_2"/>
    <property type="match status" value="1"/>
</dbReference>
<dbReference type="PROSITE" id="PS50206">
    <property type="entry name" value="RHODANESE_3"/>
    <property type="match status" value="2"/>
</dbReference>
<gene>
    <name type="primary">cysA</name>
    <name type="synonym">cysA3</name>
    <name type="ordered locus">ML2198</name>
</gene>
<feature type="chain" id="PRO_0000139414" description="Putative thiosulfate sulfurtransferase">
    <location>
        <begin position="1"/>
        <end position="277"/>
    </location>
</feature>
<feature type="domain" description="Rhodanese 1" evidence="2">
    <location>
        <begin position="18"/>
        <end position="125"/>
    </location>
</feature>
<feature type="domain" description="Rhodanese 2" evidence="2">
    <location>
        <begin position="154"/>
        <end position="274"/>
    </location>
</feature>
<feature type="active site" description="Cysteine persulfide intermediate" evidence="2">
    <location>
        <position position="233"/>
    </location>
</feature>
<feature type="binding site" evidence="1">
    <location>
        <position position="238"/>
    </location>
    <ligand>
        <name>substrate</name>
    </ligand>
</feature>
<organism>
    <name type="scientific">Mycobacterium leprae (strain TN)</name>
    <dbReference type="NCBI Taxonomy" id="272631"/>
    <lineage>
        <taxon>Bacteria</taxon>
        <taxon>Bacillati</taxon>
        <taxon>Actinomycetota</taxon>
        <taxon>Actinomycetes</taxon>
        <taxon>Mycobacteriales</taxon>
        <taxon>Mycobacteriaceae</taxon>
        <taxon>Mycobacterium</taxon>
    </lineage>
</organism>
<sequence>MARSDVLVSADWAESNLDSANIVFVEVDEDTSTYDGDHIAGAIKLDWRADLQDPIKRDFIDTQQFSKLLGDRGISNDNTVILYGGNNNWFAAYAYWYFKLYRHDKVKLLDGGRKKWELDGRPLSTDTVTRPATSYAAAAPDNTIRAFRDEVIASIKIKNLVDVRSPDEFSGKLLAPAHLPQEQSQRPGHIPSAINIPWSKAANEDGTFKSDEQLAKLYADAGLDRLKETIVYCRIGERSSHTWFVLRELLGYQNVKNYDGSWTEYGSLVGVPIELGS</sequence>
<reference key="1">
    <citation type="submission" date="1994-09" db="EMBL/GenBank/DDBJ databases">
        <authorList>
            <person name="Smith D.R."/>
            <person name="Robison K."/>
        </authorList>
    </citation>
    <scope>NUCLEOTIDE SEQUENCE [GENOMIC DNA]</scope>
</reference>
<reference key="2">
    <citation type="journal article" date="2001" name="Nature">
        <title>Massive gene decay in the leprosy bacillus.</title>
        <authorList>
            <person name="Cole S.T."/>
            <person name="Eiglmeier K."/>
            <person name="Parkhill J."/>
            <person name="James K.D."/>
            <person name="Thomson N.R."/>
            <person name="Wheeler P.R."/>
            <person name="Honore N."/>
            <person name="Garnier T."/>
            <person name="Churcher C.M."/>
            <person name="Harris D.E."/>
            <person name="Mungall K.L."/>
            <person name="Basham D."/>
            <person name="Brown D."/>
            <person name="Chillingworth T."/>
            <person name="Connor R."/>
            <person name="Davies R.M."/>
            <person name="Devlin K."/>
            <person name="Duthoy S."/>
            <person name="Feltwell T."/>
            <person name="Fraser A."/>
            <person name="Hamlin N."/>
            <person name="Holroyd S."/>
            <person name="Hornsby T."/>
            <person name="Jagels K."/>
            <person name="Lacroix C."/>
            <person name="Maclean J."/>
            <person name="Moule S."/>
            <person name="Murphy L.D."/>
            <person name="Oliver K."/>
            <person name="Quail M.A."/>
            <person name="Rajandream M.A."/>
            <person name="Rutherford K.M."/>
            <person name="Rutter S."/>
            <person name="Seeger K."/>
            <person name="Simon S."/>
            <person name="Simmonds M."/>
            <person name="Skelton J."/>
            <person name="Squares R."/>
            <person name="Squares S."/>
            <person name="Stevens K."/>
            <person name="Taylor K."/>
            <person name="Whitehead S."/>
            <person name="Woodward J.R."/>
            <person name="Barrell B.G."/>
        </authorList>
    </citation>
    <scope>NUCLEOTIDE SEQUENCE [LARGE SCALE GENOMIC DNA]</scope>
    <source>
        <strain>TN</strain>
    </source>
</reference>
<accession>Q50036</accession>
<name>THTR_MYCLE</name>
<protein>
    <recommendedName>
        <fullName>Putative thiosulfate sulfurtransferase</fullName>
        <ecNumber>2.8.1.1</ecNumber>
    </recommendedName>
    <alternativeName>
        <fullName>Rhodanese-like protein</fullName>
    </alternativeName>
</protein>
<evidence type="ECO:0000250" key="1"/>
<evidence type="ECO:0000255" key="2">
    <source>
        <dbReference type="PROSITE-ProRule" id="PRU00173"/>
    </source>
</evidence>